<keyword id="KW-0025">Alternative splicing</keyword>
<keyword id="KW-0325">Glycoprotein</keyword>
<keyword id="KW-0472">Membrane</keyword>
<keyword id="KW-0677">Repeat</keyword>
<keyword id="KW-0964">Secreted</keyword>
<keyword id="KW-0732">Signal</keyword>
<evidence type="ECO:0000255" key="1"/>
<evidence type="ECO:0000256" key="2">
    <source>
        <dbReference type="SAM" id="MobiDB-lite"/>
    </source>
</evidence>
<evidence type="ECO:0000269" key="3">
    <source>
    </source>
</evidence>
<evidence type="ECO:0000303" key="4">
    <source>
    </source>
</evidence>
<evidence type="ECO:0000305" key="5"/>
<feature type="signal peptide" evidence="1">
    <location>
        <begin position="1"/>
        <end position="26"/>
    </location>
</feature>
<feature type="chain" id="PRO_0000398814" description="Rhoptry neck protein 4">
    <location>
        <begin position="27"/>
        <end position="984"/>
    </location>
</feature>
<feature type="repeat" description="1">
    <location>
        <begin position="129"/>
        <end position="172"/>
    </location>
</feature>
<feature type="repeat" description="2">
    <location>
        <begin position="258"/>
        <end position="301"/>
    </location>
</feature>
<feature type="region of interest" description="Disordered" evidence="2">
    <location>
        <begin position="24"/>
        <end position="300"/>
    </location>
</feature>
<feature type="region of interest" description="Disordered" evidence="2">
    <location>
        <begin position="882"/>
        <end position="984"/>
    </location>
</feature>
<feature type="compositionally biased region" description="Polar residues" evidence="2">
    <location>
        <begin position="66"/>
        <end position="85"/>
    </location>
</feature>
<feature type="compositionally biased region" description="Polar residues" evidence="2">
    <location>
        <begin position="92"/>
        <end position="105"/>
    </location>
</feature>
<feature type="compositionally biased region" description="Pro residues" evidence="2">
    <location>
        <begin position="106"/>
        <end position="117"/>
    </location>
</feature>
<feature type="compositionally biased region" description="Polar residues" evidence="2">
    <location>
        <begin position="135"/>
        <end position="156"/>
    </location>
</feature>
<feature type="compositionally biased region" description="Basic residues" evidence="2">
    <location>
        <begin position="214"/>
        <end position="228"/>
    </location>
</feature>
<feature type="compositionally biased region" description="Polar residues" evidence="2">
    <location>
        <begin position="242"/>
        <end position="285"/>
    </location>
</feature>
<feature type="compositionally biased region" description="Basic residues" evidence="2">
    <location>
        <begin position="892"/>
        <end position="901"/>
    </location>
</feature>
<feature type="compositionally biased region" description="Low complexity" evidence="2">
    <location>
        <begin position="902"/>
        <end position="914"/>
    </location>
</feature>
<feature type="compositionally biased region" description="Polar residues" evidence="2">
    <location>
        <begin position="967"/>
        <end position="984"/>
    </location>
</feature>
<feature type="glycosylation site" description="N-linked (GlcNAc...) asparagine" evidence="1">
    <location>
        <position position="81"/>
    </location>
</feature>
<feature type="glycosylation site" description="N-linked (GlcNAc...) asparagine" evidence="1">
    <location>
        <position position="390"/>
    </location>
</feature>
<feature type="glycosylation site" description="N-linked (GlcNAc...) asparagine" evidence="1">
    <location>
        <position position="780"/>
    </location>
</feature>
<feature type="glycosylation site" description="N-linked (GlcNAc...) asparagine" evidence="1">
    <location>
        <position position="925"/>
    </location>
</feature>
<feature type="splice variant" id="VSP_039809" description="In isoform 2." evidence="4">
    <location>
        <begin position="1"/>
        <end position="394"/>
    </location>
</feature>
<feature type="sequence conflict" description="In Ref. 1; AAZ38166." evidence="5" ref="1">
    <original>M</original>
    <variation>V</variation>
    <location>
        <position position="892"/>
    </location>
</feature>
<feature type="sequence conflict" description="In Ref. 1; AAZ38166." evidence="5" ref="1">
    <original>T</original>
    <variation>A</variation>
    <location>
        <position position="911"/>
    </location>
</feature>
<comment type="subcellular location">
    <subcellularLocation>
        <location evidence="3">Secreted</location>
    </subcellularLocation>
    <subcellularLocation>
        <location evidence="3">Parasitophorous vacuole membrane</location>
    </subcellularLocation>
    <text>Located prominently at the junction of the body and neck portion of the rhoptry organelle in tachyzoites and bradyzoites. Upon infection, associates with the parasitophorous vacuolar membrane (PVM).</text>
</comment>
<comment type="alternative products">
    <event type="alternative splicing"/>
    <isoform>
        <id>B6KJ32-1</id>
        <name>1</name>
        <sequence type="displayed"/>
    </isoform>
    <isoform>
        <id>B6KJ32-2</id>
        <name>2</name>
        <sequence type="described" ref="VSP_039809"/>
    </isoform>
</comment>
<comment type="sequence caution" evidence="5">
    <conflict type="miscellaneous discrepancy">
        <sequence resource="EMBL-CDS" id="AAC13772"/>
    </conflict>
    <text>Chimeric cDNA, matches the C-terminus.</text>
</comment>
<comment type="sequence caution" evidence="5">
    <conflict type="miscellaneous discrepancy">
        <sequence resource="EMBL-CDS" id="AAC13773"/>
    </conflict>
    <text>Chimeric cDNA, matches the C-terminus.</text>
</comment>
<gene>
    <name type="primary">RON4</name>
</gene>
<accession>B6KJ32</accession>
<accession>B9PI02</accession>
<accession>B9Q636</accession>
<accession>Q27914</accession>
<accession>Q45WA5</accession>
<accession>Q6XNE6</accession>
<dbReference type="EMBL" id="DQ096566">
    <property type="protein sequence ID" value="AAZ38166.1"/>
    <property type="molecule type" value="mRNA"/>
</dbReference>
<dbReference type="EMBL" id="AY223804">
    <property type="protein sequence ID" value="AAP06935.1"/>
    <property type="molecule type" value="mRNA"/>
</dbReference>
<dbReference type="EMBL" id="AY223805">
    <property type="protein sequence ID" value="AAP06936.1"/>
    <property type="molecule type" value="Genomic_DNA"/>
</dbReference>
<dbReference type="EMBL" id="U13771">
    <property type="protein sequence ID" value="AAC13772.1"/>
    <property type="status" value="ALT_SEQ"/>
    <property type="molecule type" value="mRNA"/>
</dbReference>
<dbReference type="EMBL" id="U13771">
    <property type="protein sequence ID" value="AAC13773.1"/>
    <property type="status" value="ALT_SEQ"/>
    <property type="molecule type" value="mRNA"/>
</dbReference>
<dbReference type="GlyCosmos" id="B6KJ32">
    <property type="glycosylation" value="4 sites, No reported glycans"/>
</dbReference>
<dbReference type="VEuPathDB" id="ToxoDB:TGARI_229010A"/>
<dbReference type="VEuPathDB" id="ToxoDB:TGARI_229010B"/>
<dbReference type="VEuPathDB" id="ToxoDB:TGCAST_229010"/>
<dbReference type="VEuPathDB" id="ToxoDB:TGCOUG_229010A"/>
<dbReference type="VEuPathDB" id="ToxoDB:TGCOUG_229010B"/>
<dbReference type="VEuPathDB" id="ToxoDB:TGDOM2_229010A"/>
<dbReference type="VEuPathDB" id="ToxoDB:TGDOM2_229010B"/>
<dbReference type="VEuPathDB" id="ToxoDB:TGFOU_402780"/>
<dbReference type="VEuPathDB" id="ToxoDB:TGGT1_229010"/>
<dbReference type="VEuPathDB" id="ToxoDB:TGMAS_229010"/>
<dbReference type="VEuPathDB" id="ToxoDB:TGME49_229010"/>
<dbReference type="VEuPathDB" id="ToxoDB:TGP89_229010"/>
<dbReference type="VEuPathDB" id="ToxoDB:TGPRC2_229010"/>
<dbReference type="VEuPathDB" id="ToxoDB:TGRH88_073840"/>
<dbReference type="VEuPathDB" id="ToxoDB:TGRUB_430050"/>
<dbReference type="VEuPathDB" id="ToxoDB:TGRUB_430060"/>
<dbReference type="VEuPathDB" id="ToxoDB:TGVAND_229010"/>
<dbReference type="VEuPathDB" id="ToxoDB:TGVEG_229010"/>
<dbReference type="GO" id="GO:0016020">
    <property type="term" value="C:membrane"/>
    <property type="evidence" value="ECO:0007669"/>
    <property type="project" value="UniProtKB-KW"/>
</dbReference>
<dbReference type="GO" id="GO:0020005">
    <property type="term" value="C:symbiont-containing vacuole membrane"/>
    <property type="evidence" value="ECO:0007669"/>
    <property type="project" value="UniProtKB-SubCell"/>
</dbReference>
<proteinExistence type="evidence at transcript level"/>
<reference key="1">
    <citation type="journal article" date="2005" name="J. Biol. Chem.">
        <title>Proteomic analysis of rhoptry organelles reveals many novel constituents for host-parasite interactions in Toxoplasma gondii.</title>
        <authorList>
            <person name="Bradley P.J."/>
            <person name="Ward C."/>
            <person name="Cheng S.J."/>
            <person name="Alexander D.L."/>
            <person name="Coller S."/>
            <person name="Coombs G.H."/>
            <person name="Dunn J.D."/>
            <person name="Ferguson D.J."/>
            <person name="Sanderson S.J."/>
            <person name="Wastling J.M."/>
            <person name="Boothroyd J.C."/>
        </authorList>
    </citation>
    <scope>NUCLEOTIDE SEQUENCE [MRNA] (ISOFORM 1)</scope>
    <scope>SUBCELLULAR LOCATION</scope>
    <source>
        <strain>RH</strain>
    </source>
</reference>
<reference key="2">
    <citation type="journal article" date="2005" name="Parasitology">
        <title>Toxoplasma gondii dense granule protein 3 (GRA3) is a type I transmembrane protein that possesses a cytoplasmic dilysine (KKXX) endoplasmic reticulum (ER) retrieval motif.</title>
        <authorList>
            <person name="Henriquez F.L."/>
            <person name="Nickdel M.B."/>
            <person name="McLeod R."/>
            <person name="Lyons R.E."/>
            <person name="Lyons K."/>
            <person name="Dubremetz J.F."/>
            <person name="Grigg M.E."/>
            <person name="Samuel B.U."/>
            <person name="Roberts C.W."/>
        </authorList>
    </citation>
    <scope>NUCLEOTIDE SEQUENCE [GENOMIC DNA / MRNA] (ISOFORM 2)</scope>
    <source>
        <strain>RH</strain>
    </source>
</reference>
<reference key="3">
    <citation type="journal article" date="1994" name="Mol. Biochem. Parasitol.">
        <title>Cloning of a cDNA encoding the dense granule protein GRA3 from Toxoplasma gondii.</title>
        <authorList>
            <person name="Bermudes D."/>
            <person name="Dubremetz J.-F."/>
            <person name="Achbarou A."/>
            <person name="Joiner K.A."/>
        </authorList>
    </citation>
    <scope>NUCLEOTIDE SEQUENCE [MRNA] OF 910-984 (ISOFORMS 1/2)</scope>
    <source>
        <strain>RH</strain>
        <tissue>Tachyzoite</tissue>
    </source>
</reference>
<protein>
    <recommendedName>
        <fullName>Rhoptry neck protein 4</fullName>
    </recommendedName>
    <alternativeName>
        <fullName>Tg65</fullName>
    </alternativeName>
</protein>
<sequence>MAIKNTLTGSGLLVLLTLACGTTVQSSPPTPAPRMYPNMNERPLSAESRLTPGTYRSELHIDLKSPQKTASQSSLAPTGDNNSKVESIIAGSDTTPRSAEGTSESPPVPQLGTPPRPAPRRSKGEGERQPPTAAPRTSRSVDTGSGSDASTEQQAGGQKVVTPIPASKGIYPSLDELRRSQESNVDAGSGTSTNEGGGTSEGPQVPQSGIPPRTGRRRAKARNRKRHPTPASRESSSEDENQPPTTASRPSNGEGESQPPTAAPRTSRSVDTGSGSDASTEQQAGGQKVVTPIPASKGIYPNLDELRQTQEGEESAPQPADVTWFSMSVPMGVVDRRVSRALKEQFFQFLQHLSADYPKQVQTVYEFLGWVADKLPENEEEVQMFIDALNTTEAMVGKAARWIFKAIPERERETIYSSFYQMFRDKLPKKFFETAEGMNPDVGQYFSAEEPVAVTPEIPAKSEEDSEAAETPTPLRRQANVAAQVLHPLPAKGVTRREWIPWPKMQNAISKAHGPLTRVPEWTPVTGSCALGDGYTDIDVTKATTDVLFRITLLILQQIRRKKTERGKLEDDQALVALCSAAGAFVDAWQHQQQALILEDPGTPKAHAQLIERLRNAGKYFMKSYDETTGESDHQQWKKNKAEVSKLGKSALMKSCVKYIKASGDVATRPFDSGTAKYPSRSLYGGIANTLETPFADSEAVAKAVHDYAKEHKKPEKLVGLCGALQISGYFKKCFSDAGRLSSVSFFHQHVDGASVLVRTLARERPIGRHALSQAICDPNISAQYFEGAFRLFSSTVSQEWEKENLFAQLASWTGKEMVLAPSLEEQAAVPPAQPAYETVYGDEEDRIYRIHVSGRHSSPQEVLYVGGIPSTVKPQQVHVLGPTVSDESRRMIHPVRHRSRTAPSSEAASTAAESSDEDPLPAENATAFLGVTPQEEESDAYKHTLDFDAVSPRKNKNKENRISAPLKQSDTLIEESTSKTSEL</sequence>
<name>RON4_TOXGO</name>
<organism>
    <name type="scientific">Toxoplasma gondii</name>
    <dbReference type="NCBI Taxonomy" id="5811"/>
    <lineage>
        <taxon>Eukaryota</taxon>
        <taxon>Sar</taxon>
        <taxon>Alveolata</taxon>
        <taxon>Apicomplexa</taxon>
        <taxon>Conoidasida</taxon>
        <taxon>Coccidia</taxon>
        <taxon>Eucoccidiorida</taxon>
        <taxon>Eimeriorina</taxon>
        <taxon>Sarcocystidae</taxon>
        <taxon>Toxoplasma</taxon>
    </lineage>
</organism>